<organism>
    <name type="scientific">Mus musculus</name>
    <name type="common">Mouse</name>
    <dbReference type="NCBI Taxonomy" id="10090"/>
    <lineage>
        <taxon>Eukaryota</taxon>
        <taxon>Metazoa</taxon>
        <taxon>Chordata</taxon>
        <taxon>Craniata</taxon>
        <taxon>Vertebrata</taxon>
        <taxon>Euteleostomi</taxon>
        <taxon>Mammalia</taxon>
        <taxon>Eutheria</taxon>
        <taxon>Euarchontoglires</taxon>
        <taxon>Glires</taxon>
        <taxon>Rodentia</taxon>
        <taxon>Myomorpha</taxon>
        <taxon>Muroidea</taxon>
        <taxon>Muridae</taxon>
        <taxon>Murinae</taxon>
        <taxon>Mus</taxon>
        <taxon>Mus</taxon>
    </lineage>
</organism>
<reference key="1">
    <citation type="journal article" date="2000" name="Antioxid. Redox Signal.">
        <title>Characterization of human and mouse peroxiredoxin IV: evidence for inhibition by Prx-IV of epidermal growth factor- and p53-induced reactive oxygen species.</title>
        <authorList>
            <person name="Wong C.M."/>
            <person name="Chun A.C."/>
            <person name="Kok K.H."/>
            <person name="Zhou Y."/>
            <person name="Fung P.C."/>
            <person name="Kung H.F."/>
            <person name="Jeang K.-T."/>
            <person name="Jin D.-Y."/>
        </authorList>
    </citation>
    <scope>NUCLEOTIDE SEQUENCE [MRNA]</scope>
    <scope>FUNCTION</scope>
    <scope>SUBCELLULAR LOCATION</scope>
    <source>
        <strain>C57BL/6J</strain>
    </source>
</reference>
<reference key="2">
    <citation type="journal article" date="2005" name="Science">
        <title>The transcriptional landscape of the mammalian genome.</title>
        <authorList>
            <person name="Carninci P."/>
            <person name="Kasukawa T."/>
            <person name="Katayama S."/>
            <person name="Gough J."/>
            <person name="Frith M.C."/>
            <person name="Maeda N."/>
            <person name="Oyama R."/>
            <person name="Ravasi T."/>
            <person name="Lenhard B."/>
            <person name="Wells C."/>
            <person name="Kodzius R."/>
            <person name="Shimokawa K."/>
            <person name="Bajic V.B."/>
            <person name="Brenner S.E."/>
            <person name="Batalov S."/>
            <person name="Forrest A.R."/>
            <person name="Zavolan M."/>
            <person name="Davis M.J."/>
            <person name="Wilming L.G."/>
            <person name="Aidinis V."/>
            <person name="Allen J.E."/>
            <person name="Ambesi-Impiombato A."/>
            <person name="Apweiler R."/>
            <person name="Aturaliya R.N."/>
            <person name="Bailey T.L."/>
            <person name="Bansal M."/>
            <person name="Baxter L."/>
            <person name="Beisel K.W."/>
            <person name="Bersano T."/>
            <person name="Bono H."/>
            <person name="Chalk A.M."/>
            <person name="Chiu K.P."/>
            <person name="Choudhary V."/>
            <person name="Christoffels A."/>
            <person name="Clutterbuck D.R."/>
            <person name="Crowe M.L."/>
            <person name="Dalla E."/>
            <person name="Dalrymple B.P."/>
            <person name="de Bono B."/>
            <person name="Della Gatta G."/>
            <person name="di Bernardo D."/>
            <person name="Down T."/>
            <person name="Engstrom P."/>
            <person name="Fagiolini M."/>
            <person name="Faulkner G."/>
            <person name="Fletcher C.F."/>
            <person name="Fukushima T."/>
            <person name="Furuno M."/>
            <person name="Futaki S."/>
            <person name="Gariboldi M."/>
            <person name="Georgii-Hemming P."/>
            <person name="Gingeras T.R."/>
            <person name="Gojobori T."/>
            <person name="Green R.E."/>
            <person name="Gustincich S."/>
            <person name="Harbers M."/>
            <person name="Hayashi Y."/>
            <person name="Hensch T.K."/>
            <person name="Hirokawa N."/>
            <person name="Hill D."/>
            <person name="Huminiecki L."/>
            <person name="Iacono M."/>
            <person name="Ikeo K."/>
            <person name="Iwama A."/>
            <person name="Ishikawa T."/>
            <person name="Jakt M."/>
            <person name="Kanapin A."/>
            <person name="Katoh M."/>
            <person name="Kawasawa Y."/>
            <person name="Kelso J."/>
            <person name="Kitamura H."/>
            <person name="Kitano H."/>
            <person name="Kollias G."/>
            <person name="Krishnan S.P."/>
            <person name="Kruger A."/>
            <person name="Kummerfeld S.K."/>
            <person name="Kurochkin I.V."/>
            <person name="Lareau L.F."/>
            <person name="Lazarevic D."/>
            <person name="Lipovich L."/>
            <person name="Liu J."/>
            <person name="Liuni S."/>
            <person name="McWilliam S."/>
            <person name="Madan Babu M."/>
            <person name="Madera M."/>
            <person name="Marchionni L."/>
            <person name="Matsuda H."/>
            <person name="Matsuzawa S."/>
            <person name="Miki H."/>
            <person name="Mignone F."/>
            <person name="Miyake S."/>
            <person name="Morris K."/>
            <person name="Mottagui-Tabar S."/>
            <person name="Mulder N."/>
            <person name="Nakano N."/>
            <person name="Nakauchi H."/>
            <person name="Ng P."/>
            <person name="Nilsson R."/>
            <person name="Nishiguchi S."/>
            <person name="Nishikawa S."/>
            <person name="Nori F."/>
            <person name="Ohara O."/>
            <person name="Okazaki Y."/>
            <person name="Orlando V."/>
            <person name="Pang K.C."/>
            <person name="Pavan W.J."/>
            <person name="Pavesi G."/>
            <person name="Pesole G."/>
            <person name="Petrovsky N."/>
            <person name="Piazza S."/>
            <person name="Reed J."/>
            <person name="Reid J.F."/>
            <person name="Ring B.Z."/>
            <person name="Ringwald M."/>
            <person name="Rost B."/>
            <person name="Ruan Y."/>
            <person name="Salzberg S.L."/>
            <person name="Sandelin A."/>
            <person name="Schneider C."/>
            <person name="Schoenbach C."/>
            <person name="Sekiguchi K."/>
            <person name="Semple C.A."/>
            <person name="Seno S."/>
            <person name="Sessa L."/>
            <person name="Sheng Y."/>
            <person name="Shibata Y."/>
            <person name="Shimada H."/>
            <person name="Shimada K."/>
            <person name="Silva D."/>
            <person name="Sinclair B."/>
            <person name="Sperling S."/>
            <person name="Stupka E."/>
            <person name="Sugiura K."/>
            <person name="Sultana R."/>
            <person name="Takenaka Y."/>
            <person name="Taki K."/>
            <person name="Tammoja K."/>
            <person name="Tan S.L."/>
            <person name="Tang S."/>
            <person name="Taylor M.S."/>
            <person name="Tegner J."/>
            <person name="Teichmann S.A."/>
            <person name="Ueda H.R."/>
            <person name="van Nimwegen E."/>
            <person name="Verardo R."/>
            <person name="Wei C.L."/>
            <person name="Yagi K."/>
            <person name="Yamanishi H."/>
            <person name="Zabarovsky E."/>
            <person name="Zhu S."/>
            <person name="Zimmer A."/>
            <person name="Hide W."/>
            <person name="Bult C."/>
            <person name="Grimmond S.M."/>
            <person name="Teasdale R.D."/>
            <person name="Liu E.T."/>
            <person name="Brusic V."/>
            <person name="Quackenbush J."/>
            <person name="Wahlestedt C."/>
            <person name="Mattick J.S."/>
            <person name="Hume D.A."/>
            <person name="Kai C."/>
            <person name="Sasaki D."/>
            <person name="Tomaru Y."/>
            <person name="Fukuda S."/>
            <person name="Kanamori-Katayama M."/>
            <person name="Suzuki M."/>
            <person name="Aoki J."/>
            <person name="Arakawa T."/>
            <person name="Iida J."/>
            <person name="Imamura K."/>
            <person name="Itoh M."/>
            <person name="Kato T."/>
            <person name="Kawaji H."/>
            <person name="Kawagashira N."/>
            <person name="Kawashima T."/>
            <person name="Kojima M."/>
            <person name="Kondo S."/>
            <person name="Konno H."/>
            <person name="Nakano K."/>
            <person name="Ninomiya N."/>
            <person name="Nishio T."/>
            <person name="Okada M."/>
            <person name="Plessy C."/>
            <person name="Shibata K."/>
            <person name="Shiraki T."/>
            <person name="Suzuki S."/>
            <person name="Tagami M."/>
            <person name="Waki K."/>
            <person name="Watahiki A."/>
            <person name="Okamura-Oho Y."/>
            <person name="Suzuki H."/>
            <person name="Kawai J."/>
            <person name="Hayashizaki Y."/>
        </authorList>
    </citation>
    <scope>NUCLEOTIDE SEQUENCE [LARGE SCALE MRNA]</scope>
    <source>
        <strain>C57BL/6J</strain>
        <strain>DBA/2J</strain>
        <tissue>Bone marrow</tissue>
        <tissue>Liver</tissue>
    </source>
</reference>
<reference key="3">
    <citation type="journal article" date="2009" name="PLoS Biol.">
        <title>Lineage-specific biology revealed by a finished genome assembly of the mouse.</title>
        <authorList>
            <person name="Church D.M."/>
            <person name="Goodstadt L."/>
            <person name="Hillier L.W."/>
            <person name="Zody M.C."/>
            <person name="Goldstein S."/>
            <person name="She X."/>
            <person name="Bult C.J."/>
            <person name="Agarwala R."/>
            <person name="Cherry J.L."/>
            <person name="DiCuccio M."/>
            <person name="Hlavina W."/>
            <person name="Kapustin Y."/>
            <person name="Meric P."/>
            <person name="Maglott D."/>
            <person name="Birtle Z."/>
            <person name="Marques A.C."/>
            <person name="Graves T."/>
            <person name="Zhou S."/>
            <person name="Teague B."/>
            <person name="Potamousis K."/>
            <person name="Churas C."/>
            <person name="Place M."/>
            <person name="Herschleb J."/>
            <person name="Runnheim R."/>
            <person name="Forrest D."/>
            <person name="Amos-Landgraf J."/>
            <person name="Schwartz D.C."/>
            <person name="Cheng Z."/>
            <person name="Lindblad-Toh K."/>
            <person name="Eichler E.E."/>
            <person name="Ponting C.P."/>
        </authorList>
    </citation>
    <scope>NUCLEOTIDE SEQUENCE [LARGE SCALE GENOMIC DNA]</scope>
    <source>
        <strain>C57BL/6J</strain>
    </source>
</reference>
<reference key="4">
    <citation type="journal article" date="2004" name="Genome Res.">
        <title>The status, quality, and expansion of the NIH full-length cDNA project: the Mammalian Gene Collection (MGC).</title>
        <authorList>
            <consortium name="The MGC Project Team"/>
        </authorList>
    </citation>
    <scope>NUCLEOTIDE SEQUENCE [LARGE SCALE MRNA]</scope>
    <source>
        <strain>C57BL/6J</strain>
        <strain>NMRI</strain>
        <tissue>Mammary gland</tissue>
        <tissue>Mammary tumor</tissue>
    </source>
</reference>
<reference key="5">
    <citation type="submission" date="2007-07" db="UniProtKB">
        <authorList>
            <person name="Lubec G."/>
            <person name="Kang S.U."/>
            <person name="Yang J.W."/>
            <person name="Zigmond M."/>
        </authorList>
    </citation>
    <scope>PROTEIN SEQUENCE OF 190-203 AND 216-226</scope>
    <source>
        <strain>C57BL/6J</strain>
        <tissue>Brain</tissue>
    </source>
</reference>
<reference key="6">
    <citation type="journal article" date="2010" name="Cell">
        <title>A tissue-specific atlas of mouse protein phosphorylation and expression.</title>
        <authorList>
            <person name="Huttlin E.L."/>
            <person name="Jedrychowski M.P."/>
            <person name="Elias J.E."/>
            <person name="Goswami T."/>
            <person name="Rad R."/>
            <person name="Beausoleil S.A."/>
            <person name="Villen J."/>
            <person name="Haas W."/>
            <person name="Sowa M.E."/>
            <person name="Gygi S.P."/>
        </authorList>
    </citation>
    <scope>IDENTIFICATION BY MASS SPECTROMETRY [LARGE SCALE ANALYSIS]</scope>
    <source>
        <tissue>Brain</tissue>
        <tissue>Brown adipose tissue</tissue>
        <tissue>Heart</tissue>
        <tissue>Kidney</tissue>
        <tissue>Liver</tissue>
        <tissue>Lung</tissue>
        <tissue>Pancreas</tissue>
        <tissue>Spleen</tissue>
        <tissue>Testis</tissue>
    </source>
</reference>
<reference key="7">
    <citation type="journal article" date="2013" name="Sci. Rep.">
        <title>Synergistic cooperation of PDI family members in peroxiredoxin 4-driven oxidative protein folding.</title>
        <authorList>
            <person name="Sato Y."/>
            <person name="Kojima R."/>
            <person name="Okumura M."/>
            <person name="Hagiwara M."/>
            <person name="Masui S."/>
            <person name="Maegawa K."/>
            <person name="Saiki M."/>
            <person name="Horibe T."/>
            <person name="Suzuki M."/>
            <person name="Inaba K."/>
        </authorList>
    </citation>
    <scope>X-RAY CRYSTALLOGRAPHY (1.80 ANGSTROMS)</scope>
    <scope>DISULFIDE BONDS</scope>
</reference>
<dbReference type="EC" id="1.11.1.24" evidence="2"/>
<dbReference type="EMBL" id="U96746">
    <property type="protein sequence ID" value="AAB57846.1"/>
    <property type="molecule type" value="mRNA"/>
</dbReference>
<dbReference type="EMBL" id="AK005031">
    <property type="protein sequence ID" value="BAB23758.1"/>
    <property type="molecule type" value="mRNA"/>
</dbReference>
<dbReference type="EMBL" id="AK146402">
    <property type="protein sequence ID" value="BAE27143.1"/>
    <property type="molecule type" value="mRNA"/>
</dbReference>
<dbReference type="EMBL" id="AK152255">
    <property type="protein sequence ID" value="BAE31074.1"/>
    <property type="molecule type" value="mRNA"/>
</dbReference>
<dbReference type="EMBL" id="BX005263">
    <property type="status" value="NOT_ANNOTATED_CDS"/>
    <property type="molecule type" value="Genomic_DNA"/>
</dbReference>
<dbReference type="EMBL" id="BC003349">
    <property type="protein sequence ID" value="AAH03349.1"/>
    <property type="molecule type" value="mRNA"/>
</dbReference>
<dbReference type="EMBL" id="BC019578">
    <property type="protein sequence ID" value="AAH19578.1"/>
    <property type="molecule type" value="mRNA"/>
</dbReference>
<dbReference type="CCDS" id="CCDS30496.1"/>
<dbReference type="RefSeq" id="NP_001300640.1">
    <property type="nucleotide sequence ID" value="NM_001313711.1"/>
</dbReference>
<dbReference type="RefSeq" id="NP_058044.1">
    <property type="nucleotide sequence ID" value="NM_016764.5"/>
</dbReference>
<dbReference type="PDB" id="3VWU">
    <property type="method" value="X-ray"/>
    <property type="resolution" value="3.30 A"/>
    <property type="chains" value="A/B/C/D/E/F/G/H/I/J=41-274"/>
</dbReference>
<dbReference type="PDB" id="3VWV">
    <property type="method" value="X-ray"/>
    <property type="resolution" value="1.80 A"/>
    <property type="chains" value="A/B=87-274"/>
</dbReference>
<dbReference type="PDB" id="3W8J">
    <property type="method" value="X-ray"/>
    <property type="resolution" value="2.10 A"/>
    <property type="chains" value="C/D=244-263"/>
</dbReference>
<dbReference type="PDB" id="3WGX">
    <property type="method" value="X-ray"/>
    <property type="resolution" value="0.92 A"/>
    <property type="chains" value="C/D=244-263"/>
</dbReference>
<dbReference type="PDBsum" id="3VWU"/>
<dbReference type="PDBsum" id="3VWV"/>
<dbReference type="PDBsum" id="3W8J"/>
<dbReference type="PDBsum" id="3WGX"/>
<dbReference type="SMR" id="O08807"/>
<dbReference type="BioGRID" id="207303">
    <property type="interactions" value="23"/>
</dbReference>
<dbReference type="DIP" id="DIP-34137N"/>
<dbReference type="FunCoup" id="O08807">
    <property type="interactions" value="1610"/>
</dbReference>
<dbReference type="IntAct" id="O08807">
    <property type="interactions" value="9"/>
</dbReference>
<dbReference type="MINT" id="O08807"/>
<dbReference type="STRING" id="10090.ENSMUSP00000026328"/>
<dbReference type="PeroxiBase" id="4532">
    <property type="entry name" value="Mm2CysPrx04"/>
</dbReference>
<dbReference type="GlyGen" id="O08807">
    <property type="glycosylation" value="1 site, 1 O-linked glycan (1 site)"/>
</dbReference>
<dbReference type="iPTMnet" id="O08807"/>
<dbReference type="PhosphoSitePlus" id="O08807"/>
<dbReference type="SwissPalm" id="O08807"/>
<dbReference type="REPRODUCTION-2DPAGE" id="O08807"/>
<dbReference type="CPTAC" id="non-CPTAC-3866"/>
<dbReference type="jPOST" id="O08807"/>
<dbReference type="PaxDb" id="10090-ENSMUSP00000026328"/>
<dbReference type="PeptideAtlas" id="O08807"/>
<dbReference type="ProteomicsDB" id="291790"/>
<dbReference type="Pumba" id="O08807"/>
<dbReference type="Antibodypedia" id="3275">
    <property type="antibodies" value="476 antibodies from 39 providers"/>
</dbReference>
<dbReference type="DNASU" id="53381"/>
<dbReference type="Ensembl" id="ENSMUST00000026328.11">
    <property type="protein sequence ID" value="ENSMUSP00000026328.5"/>
    <property type="gene ID" value="ENSMUSG00000025289.16"/>
</dbReference>
<dbReference type="GeneID" id="53381"/>
<dbReference type="KEGG" id="mmu:53381"/>
<dbReference type="UCSC" id="uc009uru.1">
    <property type="organism name" value="mouse"/>
</dbReference>
<dbReference type="AGR" id="MGI:1859815"/>
<dbReference type="CTD" id="10549"/>
<dbReference type="MGI" id="MGI:1859815">
    <property type="gene designation" value="Prdx4"/>
</dbReference>
<dbReference type="VEuPathDB" id="HostDB:ENSMUSG00000025289"/>
<dbReference type="eggNOG" id="KOG0852">
    <property type="taxonomic scope" value="Eukaryota"/>
</dbReference>
<dbReference type="GeneTree" id="ENSGT00940000153430"/>
<dbReference type="HOGENOM" id="CLU_042529_21_1_1"/>
<dbReference type="InParanoid" id="O08807"/>
<dbReference type="OMA" id="NNFGVMR"/>
<dbReference type="OrthoDB" id="185659at2759"/>
<dbReference type="PhylomeDB" id="O08807"/>
<dbReference type="TreeFam" id="TF105181"/>
<dbReference type="Reactome" id="R-MMU-6798695">
    <property type="pathway name" value="Neutrophil degranulation"/>
</dbReference>
<dbReference type="BioGRID-ORCS" id="53381">
    <property type="hits" value="2 hits in 79 CRISPR screens"/>
</dbReference>
<dbReference type="ChiTaRS" id="Prdx4">
    <property type="organism name" value="mouse"/>
</dbReference>
<dbReference type="EvolutionaryTrace" id="O08807"/>
<dbReference type="PRO" id="PR:O08807"/>
<dbReference type="Proteomes" id="UP000000589">
    <property type="component" value="Chromosome X"/>
</dbReference>
<dbReference type="RNAct" id="O08807">
    <property type="molecule type" value="protein"/>
</dbReference>
<dbReference type="Bgee" id="ENSMUSG00000025289">
    <property type="expression patterns" value="Expressed in saccule of membranous labyrinth and 262 other cell types or tissues"/>
</dbReference>
<dbReference type="ExpressionAtlas" id="O08807">
    <property type="expression patterns" value="baseline and differential"/>
</dbReference>
<dbReference type="GO" id="GO:0005737">
    <property type="term" value="C:cytoplasm"/>
    <property type="evidence" value="ECO:0000314"/>
    <property type="project" value="MGI"/>
</dbReference>
<dbReference type="GO" id="GO:0005829">
    <property type="term" value="C:cytosol"/>
    <property type="evidence" value="ECO:0000314"/>
    <property type="project" value="MGI"/>
</dbReference>
<dbReference type="GO" id="GO:0005783">
    <property type="term" value="C:endoplasmic reticulum"/>
    <property type="evidence" value="ECO:0000314"/>
    <property type="project" value="MGI"/>
</dbReference>
<dbReference type="GO" id="GO:0005739">
    <property type="term" value="C:mitochondrion"/>
    <property type="evidence" value="ECO:0007005"/>
    <property type="project" value="MGI"/>
</dbReference>
<dbReference type="GO" id="GO:0042802">
    <property type="term" value="F:identical protein binding"/>
    <property type="evidence" value="ECO:0000353"/>
    <property type="project" value="MGI"/>
</dbReference>
<dbReference type="GO" id="GO:0140313">
    <property type="term" value="F:molecular sequestering activity"/>
    <property type="evidence" value="ECO:0007669"/>
    <property type="project" value="Ensembl"/>
</dbReference>
<dbReference type="GO" id="GO:0140824">
    <property type="term" value="F:thioredoxin-dependent peroxiredoxin activity"/>
    <property type="evidence" value="ECO:0007669"/>
    <property type="project" value="UniProtKB-EC"/>
</dbReference>
<dbReference type="GO" id="GO:0045454">
    <property type="term" value="P:cell redox homeostasis"/>
    <property type="evidence" value="ECO:0000316"/>
    <property type="project" value="MGI"/>
</dbReference>
<dbReference type="GO" id="GO:0030198">
    <property type="term" value="P:extracellular matrix organization"/>
    <property type="evidence" value="ECO:0000316"/>
    <property type="project" value="MGI"/>
</dbReference>
<dbReference type="GO" id="GO:0008584">
    <property type="term" value="P:male gonad development"/>
    <property type="evidence" value="ECO:0000315"/>
    <property type="project" value="MGI"/>
</dbReference>
<dbReference type="GO" id="GO:2000255">
    <property type="term" value="P:negative regulation of male germ cell proliferation"/>
    <property type="evidence" value="ECO:0000315"/>
    <property type="project" value="MGI"/>
</dbReference>
<dbReference type="GO" id="GO:0051604">
    <property type="term" value="P:protein maturation"/>
    <property type="evidence" value="ECO:0000316"/>
    <property type="project" value="MGI"/>
</dbReference>
<dbReference type="GO" id="GO:0072593">
    <property type="term" value="P:reactive oxygen species metabolic process"/>
    <property type="evidence" value="ECO:0000314"/>
    <property type="project" value="MGI"/>
</dbReference>
<dbReference type="GO" id="GO:0006979">
    <property type="term" value="P:response to oxidative stress"/>
    <property type="evidence" value="ECO:0000315"/>
    <property type="project" value="MGI"/>
</dbReference>
<dbReference type="GO" id="GO:0007283">
    <property type="term" value="P:spermatogenesis"/>
    <property type="evidence" value="ECO:0000315"/>
    <property type="project" value="MGI"/>
</dbReference>
<dbReference type="CDD" id="cd03015">
    <property type="entry name" value="PRX_Typ2cys"/>
    <property type="match status" value="1"/>
</dbReference>
<dbReference type="DisProt" id="DP02001"/>
<dbReference type="FunFam" id="3.40.30.10:FF:000003">
    <property type="entry name" value="Peroxiredoxin 1"/>
    <property type="match status" value="1"/>
</dbReference>
<dbReference type="Gene3D" id="3.40.30.10">
    <property type="entry name" value="Glutaredoxin"/>
    <property type="match status" value="1"/>
</dbReference>
<dbReference type="InterPro" id="IPR000866">
    <property type="entry name" value="AhpC/TSA"/>
</dbReference>
<dbReference type="InterPro" id="IPR050217">
    <property type="entry name" value="Peroxiredoxin"/>
</dbReference>
<dbReference type="InterPro" id="IPR019479">
    <property type="entry name" value="Peroxiredoxin_C"/>
</dbReference>
<dbReference type="InterPro" id="IPR036249">
    <property type="entry name" value="Thioredoxin-like_sf"/>
</dbReference>
<dbReference type="InterPro" id="IPR013766">
    <property type="entry name" value="Thioredoxin_domain"/>
</dbReference>
<dbReference type="PANTHER" id="PTHR10681:SF173">
    <property type="entry name" value="PEROXIREDOXIN-4"/>
    <property type="match status" value="1"/>
</dbReference>
<dbReference type="PANTHER" id="PTHR10681">
    <property type="entry name" value="THIOREDOXIN PEROXIDASE"/>
    <property type="match status" value="1"/>
</dbReference>
<dbReference type="Pfam" id="PF10417">
    <property type="entry name" value="1-cysPrx_C"/>
    <property type="match status" value="1"/>
</dbReference>
<dbReference type="Pfam" id="PF00578">
    <property type="entry name" value="AhpC-TSA"/>
    <property type="match status" value="1"/>
</dbReference>
<dbReference type="SUPFAM" id="SSF52833">
    <property type="entry name" value="Thioredoxin-like"/>
    <property type="match status" value="1"/>
</dbReference>
<dbReference type="PROSITE" id="PS51352">
    <property type="entry name" value="THIOREDOXIN_2"/>
    <property type="match status" value="1"/>
</dbReference>
<keyword id="KW-0002">3D-structure</keyword>
<keyword id="KW-0049">Antioxidant</keyword>
<keyword id="KW-0963">Cytoplasm</keyword>
<keyword id="KW-0903">Direct protein sequencing</keyword>
<keyword id="KW-1015">Disulfide bond</keyword>
<keyword id="KW-0256">Endoplasmic reticulum</keyword>
<keyword id="KW-0560">Oxidoreductase</keyword>
<keyword id="KW-0575">Peroxidase</keyword>
<keyword id="KW-0676">Redox-active center</keyword>
<keyword id="KW-1185">Reference proteome</keyword>
<keyword id="KW-0732">Signal</keyword>
<protein>
    <recommendedName>
        <fullName>Peroxiredoxin-4</fullName>
        <ecNumber evidence="2">1.11.1.24</ecNumber>
    </recommendedName>
    <alternativeName>
        <fullName>Antioxidant enzyme AOE372</fullName>
    </alternativeName>
    <alternativeName>
        <fullName>Peroxiredoxin IV</fullName>
        <shortName>Prx-IV</shortName>
    </alternativeName>
    <alternativeName>
        <fullName>Thioredoxin peroxidase AO372</fullName>
    </alternativeName>
    <alternativeName>
        <fullName>Thioredoxin-dependent peroxide reductase A0372</fullName>
    </alternativeName>
    <alternativeName>
        <fullName evidence="6">Thioredoxin-dependent peroxiredoxin 4</fullName>
    </alternativeName>
</protein>
<feature type="signal peptide" evidence="1">
    <location>
        <begin position="1"/>
        <end position="40"/>
    </location>
</feature>
<feature type="chain" id="PRO_0000135099" description="Peroxiredoxin-4">
    <location>
        <begin position="41"/>
        <end position="274"/>
    </location>
</feature>
<feature type="domain" description="Thioredoxin" evidence="3">
    <location>
        <begin position="82"/>
        <end position="240"/>
    </location>
</feature>
<feature type="active site" description="Cysteine sulfenic acid (-SOH) intermediate" evidence="2">
    <location>
        <position position="127"/>
    </location>
</feature>
<feature type="disulfide bond" description="Interchain (with C-248); in linked form" evidence="5 7 8">
    <location>
        <position position="127"/>
    </location>
</feature>
<feature type="disulfide bond" description="Interchain (with C-127); in linked form" evidence="5 7 8">
    <location>
        <position position="248"/>
    </location>
</feature>
<feature type="strand" evidence="9">
    <location>
        <begin position="92"/>
        <end position="97"/>
    </location>
</feature>
<feature type="strand" evidence="9">
    <location>
        <begin position="100"/>
        <end position="105"/>
    </location>
</feature>
<feature type="helix" evidence="9">
    <location>
        <begin position="106"/>
        <end position="109"/>
    </location>
</feature>
<feature type="strand" evidence="9">
    <location>
        <begin position="112"/>
        <end position="118"/>
    </location>
</feature>
<feature type="strand" evidence="9">
    <location>
        <begin position="122"/>
        <end position="126"/>
    </location>
</feature>
<feature type="helix" evidence="9">
    <location>
        <begin position="129"/>
        <end position="136"/>
    </location>
</feature>
<feature type="helix" evidence="9">
    <location>
        <begin position="138"/>
        <end position="143"/>
    </location>
</feature>
<feature type="strand" evidence="9">
    <location>
        <begin position="146"/>
        <end position="154"/>
    </location>
</feature>
<feature type="helix" evidence="9">
    <location>
        <begin position="156"/>
        <end position="163"/>
    </location>
</feature>
<feature type="helix" evidence="9">
    <location>
        <begin position="167"/>
        <end position="169"/>
    </location>
</feature>
<feature type="strand" evidence="9">
    <location>
        <begin position="179"/>
        <end position="181"/>
    </location>
</feature>
<feature type="helix" evidence="9">
    <location>
        <begin position="186"/>
        <end position="190"/>
    </location>
</feature>
<feature type="turn" evidence="9">
    <location>
        <begin position="196"/>
        <end position="199"/>
    </location>
</feature>
<feature type="strand" evidence="9">
    <location>
        <begin position="204"/>
        <end position="208"/>
    </location>
</feature>
<feature type="strand" evidence="9">
    <location>
        <begin position="212"/>
        <end position="219"/>
    </location>
</feature>
<feature type="helix" evidence="9">
    <location>
        <begin position="226"/>
        <end position="244"/>
    </location>
</feature>
<proteinExistence type="evidence at protein level"/>
<name>PRDX4_MOUSE</name>
<sequence length="274" mass="31053">MEARSKLLDGTTASRRWTRKLVLLLPPLLLFLLRTESLQGLESDERFRTRENECHFYAGGQVYPGEASRVSVADHSLHLSKAKISKPAPYWEGTAVINGEFKELKLTDYRGKYLVFFFYPLDFTFVCPTEIIAFGDRIEEFKSINTEVVACSVDSQFTHLAWINTPRRQGGLGPIRIPLLSDLNHQISKDYGVYLEDSGHTLRGLFIIDDKGVLRQITLNDLPVGRSVDETLRLVQAFQYTDKHGEVCPAGWKPGSETIIPDPAGKLKYFDKLN</sequence>
<comment type="function">
    <text evidence="2 4">Thiol-specific peroxidase that catalyzes the reduction of hydrogen peroxide and organic hydroperoxides to water and alcohols, respectively. Plays a role in cell protection against oxidative stress by detoxifying peroxides and as sensor of hydrogen peroxide-mediated signaling events (PubMed:11229364). Regulates the activation of NF-kappa-B in the cytosol by a modulation of I-kappa-B-alpha phosphorylation (By similarity).</text>
</comment>
<comment type="catalytic activity">
    <reaction evidence="2">
        <text>a hydroperoxide + [thioredoxin]-dithiol = an alcohol + [thioredoxin]-disulfide + H2O</text>
        <dbReference type="Rhea" id="RHEA:62620"/>
        <dbReference type="Rhea" id="RHEA-COMP:10698"/>
        <dbReference type="Rhea" id="RHEA-COMP:10700"/>
        <dbReference type="ChEBI" id="CHEBI:15377"/>
        <dbReference type="ChEBI" id="CHEBI:29950"/>
        <dbReference type="ChEBI" id="CHEBI:30879"/>
        <dbReference type="ChEBI" id="CHEBI:35924"/>
        <dbReference type="ChEBI" id="CHEBI:50058"/>
        <dbReference type="EC" id="1.11.1.24"/>
    </reaction>
</comment>
<comment type="subunit">
    <text evidence="2">Homodimer; disulfide-linked, upon oxidation. 5 homodimers assemble to form a ring-like decamer.</text>
</comment>
<comment type="interaction">
    <interactant intactId="EBI-494652">
        <id>O08807</id>
    </interactant>
    <interactant intactId="EBI-16091651">
        <id>Q8NBS9-1</id>
        <label>TXNDC5</label>
    </interactant>
    <organismsDiffer>true</organismsDiffer>
    <experiments>2</experiments>
</comment>
<comment type="subcellular location">
    <subcellularLocation>
        <location evidence="2">Cytoplasm</location>
    </subcellularLocation>
    <subcellularLocation>
        <location evidence="2">Endoplasmic reticulum</location>
    </subcellularLocation>
    <text evidence="4">Not secreted.</text>
</comment>
<comment type="PTM">
    <text evidence="2">The enzyme can be inactivated by further oxidation of the cysteine sulfenic acid (C(P)-SOH) to sulphinic acid (C(P)-SO2H) and sulphonic acid (C(P)-SO3H) instead of its condensation to a disulfide bond.</text>
</comment>
<comment type="miscellaneous">
    <text evidence="2">The active site is a conserved redox-active cysteine residue, the peroxidatic cysteine (C(P)), which makes the nucleophilic attack on the peroxide substrate. The peroxide oxidizes the C(P)-SH to cysteine sulfenic acid (C(P)-SOH), which then reacts with another cysteine residue, the resolving cysteine (C(R)), to form a disulfide bridge. The disulfide is subsequently reduced by an appropriate electron donor to complete the catalytic cycle. In this typical 2-Cys peroxiredoxin, C(R) is provided by the other dimeric subunit to form an intersubunit disulfide. The disulfide is subsequently reduced by thioredoxin.</text>
</comment>
<comment type="similarity">
    <text evidence="6">Belongs to the peroxiredoxin family. AhpC/Prx1 subfamily.</text>
</comment>
<evidence type="ECO:0000250" key="1"/>
<evidence type="ECO:0000250" key="2">
    <source>
        <dbReference type="UniProtKB" id="Q13162"/>
    </source>
</evidence>
<evidence type="ECO:0000255" key="3">
    <source>
        <dbReference type="PROSITE-ProRule" id="PRU00691"/>
    </source>
</evidence>
<evidence type="ECO:0000269" key="4">
    <source>
    </source>
</evidence>
<evidence type="ECO:0000269" key="5">
    <source>
    </source>
</evidence>
<evidence type="ECO:0000305" key="6"/>
<evidence type="ECO:0007744" key="7">
    <source>
        <dbReference type="PDB" id="3VWU"/>
    </source>
</evidence>
<evidence type="ECO:0007744" key="8">
    <source>
        <dbReference type="PDB" id="3VWV"/>
    </source>
</evidence>
<evidence type="ECO:0007829" key="9">
    <source>
        <dbReference type="PDB" id="3VWV"/>
    </source>
</evidence>
<gene>
    <name type="primary">Prdx4</name>
</gene>
<accession>O08807</accession>
<accession>B1AZS7</accession>
<accession>Q3U8E4</accession>